<keyword id="KW-0349">Heme</keyword>
<keyword id="KW-0376">Hydrogen peroxide</keyword>
<keyword id="KW-0408">Iron</keyword>
<keyword id="KW-0479">Metal-binding</keyword>
<keyword id="KW-0560">Oxidoreductase</keyword>
<keyword id="KW-0575">Peroxidase</keyword>
<keyword id="KW-1185">Reference proteome</keyword>
<keyword id="KW-0732">Signal</keyword>
<protein>
    <recommendedName>
        <fullName evidence="1">Catalase-peroxidase</fullName>
        <shortName evidence="1">CP</shortName>
        <ecNumber evidence="1">1.11.1.21</ecNumber>
    </recommendedName>
    <alternativeName>
        <fullName evidence="1">Peroxidase/catalase</fullName>
    </alternativeName>
</protein>
<sequence length="751" mass="81975">MSNETKCPFSHAAGGGTTNRDWWPNQLRLDLLSQHSSKSNPLGGDFNYAKAFKSLDFAAVKKDLAALMTDSQDWWPADFGHYGPLFIRMAWHSAGTYRIGDGRGGAGRGQQRFAPLNSWPDNASLDKARRLLWPIKQKYGQKISWADLMILAGNVALETMGFKTFGFGGGREDTWEPDADVSWGKEKTWLGGDLRYGKGAAGKDEGVVVADEALHGTETSRTDSGRNLENPLAAVQMGLIYVNPEGPDGNPDPLAAAHDIRESFGRMAMDDEETVALIAGGHAFGKTHGAGPADNIGPEPEGADLERQGLGWASTFGTGKGADTITSGLEVTWSNTPTKWGNSYLENLFGHEWELTKSPAGANQWVAKDAAETIPHAYDPAKKLRPTMLTTDLSLRFDPAYEKISRRFLEHPDQLADAFARAWFKLIHRDMGPRARYLGPEVPAEELLWQDPIPAVDHPLVNEQDVAALKQKILASGLPVSQLVQTAWASASTFRGSDKRGGANGARIRLAPQKDWAANEPEQLAKVLKVLEGIQAEFNGAQSGGKKISLADLIVLAGGAGIEQAAQKAGHRVTVPFTPGRMDASQEQTDVQSVGALEPIADGFRNFLKGKYNIRAEDLLIDKAQLLTLTAPEMTVLIGGLRVLNVHTGQDAHGVFTDRPETLSNDFFRNLLDMRTEWKPLSEARDVFEGRDAKTGAKKWTGTRVDLVFGSNSQLRALCEVYASEDGQEKFVRDFVAAWAKVMNLDRFDVA</sequence>
<gene>
    <name evidence="1" type="primary">katG</name>
    <name type="ordered locus">H16_A2777</name>
</gene>
<accession>Q0K815</accession>
<evidence type="ECO:0000255" key="1">
    <source>
        <dbReference type="HAMAP-Rule" id="MF_01961"/>
    </source>
</evidence>
<proteinExistence type="inferred from homology"/>
<feature type="signal peptide" evidence="1">
    <location>
        <begin position="1"/>
        <end position="12"/>
    </location>
</feature>
<feature type="chain" id="PRO_0000354875" description="Catalase-peroxidase">
    <location>
        <begin position="13"/>
        <end position="751"/>
    </location>
</feature>
<feature type="active site" description="Proton acceptor" evidence="1">
    <location>
        <position position="92"/>
    </location>
</feature>
<feature type="binding site" description="axial binding residue" evidence="1">
    <location>
        <position position="282"/>
    </location>
    <ligand>
        <name>heme b</name>
        <dbReference type="ChEBI" id="CHEBI:60344"/>
    </ligand>
    <ligandPart>
        <name>Fe</name>
        <dbReference type="ChEBI" id="CHEBI:18248"/>
    </ligandPart>
</feature>
<feature type="site" description="Transition state stabilizer" evidence="1">
    <location>
        <position position="88"/>
    </location>
</feature>
<feature type="cross-link" description="Tryptophyl-tyrosyl-methioninium (Trp-Tyr) (with M-267)" evidence="1">
    <location>
        <begin position="91"/>
        <end position="241"/>
    </location>
</feature>
<feature type="cross-link" description="Tryptophyl-tyrosyl-methioninium (Tyr-Met) (with W-91)" evidence="1">
    <location>
        <begin position="241"/>
        <end position="267"/>
    </location>
</feature>
<reference key="1">
    <citation type="journal article" date="2006" name="Nat. Biotechnol.">
        <title>Genome sequence of the bioplastic-producing 'Knallgas' bacterium Ralstonia eutropha H16.</title>
        <authorList>
            <person name="Pohlmann A."/>
            <person name="Fricke W.F."/>
            <person name="Reinecke F."/>
            <person name="Kusian B."/>
            <person name="Liesegang H."/>
            <person name="Cramm R."/>
            <person name="Eitinger T."/>
            <person name="Ewering C."/>
            <person name="Poetter M."/>
            <person name="Schwartz E."/>
            <person name="Strittmatter A."/>
            <person name="Voss I."/>
            <person name="Gottschalk G."/>
            <person name="Steinbuechel A."/>
            <person name="Friedrich B."/>
            <person name="Bowien B."/>
        </authorList>
    </citation>
    <scope>NUCLEOTIDE SEQUENCE [LARGE SCALE GENOMIC DNA]</scope>
    <source>
        <strain>ATCC 17699 / DSM 428 / KCTC 22496 / NCIMB 10442 / H16 / Stanier 337</strain>
    </source>
</reference>
<dbReference type="EC" id="1.11.1.21" evidence="1"/>
<dbReference type="EMBL" id="AM260479">
    <property type="protein sequence ID" value="CAJ93856.1"/>
    <property type="molecule type" value="Genomic_DNA"/>
</dbReference>
<dbReference type="RefSeq" id="WP_011615827.1">
    <property type="nucleotide sequence ID" value="NC_008313.1"/>
</dbReference>
<dbReference type="SMR" id="Q0K815"/>
<dbReference type="STRING" id="381666.H16_A2777"/>
<dbReference type="KEGG" id="reh:H16_A2777"/>
<dbReference type="PATRIC" id="fig|381666.6.peg.3174"/>
<dbReference type="eggNOG" id="COG0376">
    <property type="taxonomic scope" value="Bacteria"/>
</dbReference>
<dbReference type="HOGENOM" id="CLU_025424_2_0_4"/>
<dbReference type="OrthoDB" id="9759743at2"/>
<dbReference type="Proteomes" id="UP000008210">
    <property type="component" value="Chromosome 1"/>
</dbReference>
<dbReference type="GO" id="GO:0005829">
    <property type="term" value="C:cytosol"/>
    <property type="evidence" value="ECO:0007669"/>
    <property type="project" value="TreeGrafter"/>
</dbReference>
<dbReference type="GO" id="GO:0004096">
    <property type="term" value="F:catalase activity"/>
    <property type="evidence" value="ECO:0007669"/>
    <property type="project" value="UniProtKB-UniRule"/>
</dbReference>
<dbReference type="GO" id="GO:0020037">
    <property type="term" value="F:heme binding"/>
    <property type="evidence" value="ECO:0007669"/>
    <property type="project" value="InterPro"/>
</dbReference>
<dbReference type="GO" id="GO:0046872">
    <property type="term" value="F:metal ion binding"/>
    <property type="evidence" value="ECO:0007669"/>
    <property type="project" value="UniProtKB-KW"/>
</dbReference>
<dbReference type="GO" id="GO:0070301">
    <property type="term" value="P:cellular response to hydrogen peroxide"/>
    <property type="evidence" value="ECO:0007669"/>
    <property type="project" value="TreeGrafter"/>
</dbReference>
<dbReference type="GO" id="GO:0042744">
    <property type="term" value="P:hydrogen peroxide catabolic process"/>
    <property type="evidence" value="ECO:0007669"/>
    <property type="project" value="UniProtKB-KW"/>
</dbReference>
<dbReference type="CDD" id="cd00649">
    <property type="entry name" value="catalase_peroxidase_1"/>
    <property type="match status" value="1"/>
</dbReference>
<dbReference type="CDD" id="cd08200">
    <property type="entry name" value="catalase_peroxidase_2"/>
    <property type="match status" value="1"/>
</dbReference>
<dbReference type="FunFam" id="1.10.420.10:FF:000002">
    <property type="entry name" value="Catalase-peroxidase"/>
    <property type="match status" value="1"/>
</dbReference>
<dbReference type="FunFam" id="1.10.420.10:FF:000004">
    <property type="entry name" value="Catalase-peroxidase"/>
    <property type="match status" value="1"/>
</dbReference>
<dbReference type="FunFam" id="1.10.520.10:FF:000002">
    <property type="entry name" value="Catalase-peroxidase"/>
    <property type="match status" value="1"/>
</dbReference>
<dbReference type="FunFam" id="1.10.520.10:FF:000004">
    <property type="entry name" value="Catalase-peroxidase"/>
    <property type="match status" value="1"/>
</dbReference>
<dbReference type="Gene3D" id="1.10.520.10">
    <property type="match status" value="2"/>
</dbReference>
<dbReference type="Gene3D" id="1.10.420.10">
    <property type="entry name" value="Peroxidase, domain 2"/>
    <property type="match status" value="2"/>
</dbReference>
<dbReference type="HAMAP" id="MF_01961">
    <property type="entry name" value="Catal_peroxid"/>
    <property type="match status" value="1"/>
</dbReference>
<dbReference type="InterPro" id="IPR000763">
    <property type="entry name" value="Catalase_peroxidase"/>
</dbReference>
<dbReference type="InterPro" id="IPR002016">
    <property type="entry name" value="Haem_peroxidase"/>
</dbReference>
<dbReference type="InterPro" id="IPR010255">
    <property type="entry name" value="Haem_peroxidase_sf"/>
</dbReference>
<dbReference type="InterPro" id="IPR019794">
    <property type="entry name" value="Peroxidases_AS"/>
</dbReference>
<dbReference type="InterPro" id="IPR019793">
    <property type="entry name" value="Peroxidases_heam-ligand_BS"/>
</dbReference>
<dbReference type="NCBIfam" id="TIGR00198">
    <property type="entry name" value="cat_per_HPI"/>
    <property type="match status" value="1"/>
</dbReference>
<dbReference type="NCBIfam" id="NF011635">
    <property type="entry name" value="PRK15061.1"/>
    <property type="match status" value="1"/>
</dbReference>
<dbReference type="PANTHER" id="PTHR30555:SF0">
    <property type="entry name" value="CATALASE-PEROXIDASE"/>
    <property type="match status" value="1"/>
</dbReference>
<dbReference type="PANTHER" id="PTHR30555">
    <property type="entry name" value="HYDROPEROXIDASE I, BIFUNCTIONAL CATALASE-PEROXIDASE"/>
    <property type="match status" value="1"/>
</dbReference>
<dbReference type="Pfam" id="PF00141">
    <property type="entry name" value="peroxidase"/>
    <property type="match status" value="2"/>
</dbReference>
<dbReference type="PRINTS" id="PR00460">
    <property type="entry name" value="BPEROXIDASE"/>
</dbReference>
<dbReference type="PRINTS" id="PR00458">
    <property type="entry name" value="PEROXIDASE"/>
</dbReference>
<dbReference type="SUPFAM" id="SSF48113">
    <property type="entry name" value="Heme-dependent peroxidases"/>
    <property type="match status" value="2"/>
</dbReference>
<dbReference type="PROSITE" id="PS00435">
    <property type="entry name" value="PEROXIDASE_1"/>
    <property type="match status" value="1"/>
</dbReference>
<dbReference type="PROSITE" id="PS00436">
    <property type="entry name" value="PEROXIDASE_2"/>
    <property type="match status" value="1"/>
</dbReference>
<dbReference type="PROSITE" id="PS50873">
    <property type="entry name" value="PEROXIDASE_4"/>
    <property type="match status" value="1"/>
</dbReference>
<organism>
    <name type="scientific">Cupriavidus necator (strain ATCC 17699 / DSM 428 / KCTC 22496 / NCIMB 10442 / H16 / Stanier 337)</name>
    <name type="common">Ralstonia eutropha</name>
    <dbReference type="NCBI Taxonomy" id="381666"/>
    <lineage>
        <taxon>Bacteria</taxon>
        <taxon>Pseudomonadati</taxon>
        <taxon>Pseudomonadota</taxon>
        <taxon>Betaproteobacteria</taxon>
        <taxon>Burkholderiales</taxon>
        <taxon>Burkholderiaceae</taxon>
        <taxon>Cupriavidus</taxon>
    </lineage>
</organism>
<name>KATG_CUPNH</name>
<comment type="function">
    <text evidence="1">Bifunctional enzyme with both catalase and broad-spectrum peroxidase activity.</text>
</comment>
<comment type="catalytic activity">
    <reaction evidence="1">
        <text>H2O2 + AH2 = A + 2 H2O</text>
        <dbReference type="Rhea" id="RHEA:30275"/>
        <dbReference type="ChEBI" id="CHEBI:13193"/>
        <dbReference type="ChEBI" id="CHEBI:15377"/>
        <dbReference type="ChEBI" id="CHEBI:16240"/>
        <dbReference type="ChEBI" id="CHEBI:17499"/>
        <dbReference type="EC" id="1.11.1.21"/>
    </reaction>
</comment>
<comment type="catalytic activity">
    <reaction evidence="1">
        <text>2 H2O2 = O2 + 2 H2O</text>
        <dbReference type="Rhea" id="RHEA:20309"/>
        <dbReference type="ChEBI" id="CHEBI:15377"/>
        <dbReference type="ChEBI" id="CHEBI:15379"/>
        <dbReference type="ChEBI" id="CHEBI:16240"/>
        <dbReference type="EC" id="1.11.1.21"/>
    </reaction>
</comment>
<comment type="cofactor">
    <cofactor evidence="1">
        <name>heme b</name>
        <dbReference type="ChEBI" id="CHEBI:60344"/>
    </cofactor>
    <text evidence="1">Binds 1 heme b (iron(II)-protoporphyrin IX) group per dimer.</text>
</comment>
<comment type="subunit">
    <text evidence="1">Homodimer or homotetramer.</text>
</comment>
<comment type="PTM">
    <text evidence="1">Formation of the three residue Trp-Tyr-Met cross-link is important for the catalase, but not the peroxidase activity of the enzyme.</text>
</comment>
<comment type="similarity">
    <text evidence="1">Belongs to the peroxidase family. Peroxidase/catalase subfamily.</text>
</comment>